<feature type="chain" id="PRO_0000437316" description="Hydrolase FUB4">
    <location>
        <begin position="1"/>
        <end position="267"/>
    </location>
</feature>
<feature type="active site" description="Charge relay system" evidence="1">
    <location>
        <position position="93"/>
    </location>
</feature>
<feature type="active site" description="Charge relay system" evidence="1">
    <location>
        <position position="183"/>
    </location>
</feature>
<feature type="active site" description="Charge relay system" evidence="1">
    <location>
        <position position="243"/>
    </location>
</feature>
<organism>
    <name type="scientific">Gibberella moniliformis (strain M3125 / FGSC 7600)</name>
    <name type="common">Maize ear and stalk rot fungus</name>
    <name type="synonym">Fusarium verticillioides</name>
    <dbReference type="NCBI Taxonomy" id="334819"/>
    <lineage>
        <taxon>Eukaryota</taxon>
        <taxon>Fungi</taxon>
        <taxon>Dikarya</taxon>
        <taxon>Ascomycota</taxon>
        <taxon>Pezizomycotina</taxon>
        <taxon>Sordariomycetes</taxon>
        <taxon>Hypocreomycetidae</taxon>
        <taxon>Hypocreales</taxon>
        <taxon>Nectriaceae</taxon>
        <taxon>Fusarium</taxon>
        <taxon>Fusarium fujikuroi species complex</taxon>
    </lineage>
</organism>
<dbReference type="EC" id="3.1.-.-" evidence="15"/>
<dbReference type="EMBL" id="CM000580">
    <property type="protein sequence ID" value="EWG54261.1"/>
    <property type="molecule type" value="Genomic_DNA"/>
</dbReference>
<dbReference type="RefSeq" id="XP_018760452.1">
    <property type="nucleotide sequence ID" value="XM_018901860.1"/>
</dbReference>
<dbReference type="SMR" id="W7MT28"/>
<dbReference type="STRING" id="334819.W7MT28"/>
<dbReference type="ESTHER" id="gibf5-fub4">
    <property type="family name" value="FSH1"/>
</dbReference>
<dbReference type="EnsemblFungi" id="FVEG_12520T0">
    <property type="protein sequence ID" value="FVEG_12520T0"/>
    <property type="gene ID" value="FVEG_12520"/>
</dbReference>
<dbReference type="GeneID" id="30069954"/>
<dbReference type="KEGG" id="fvr:FVEG_12520"/>
<dbReference type="VEuPathDB" id="FungiDB:FVEG_12520"/>
<dbReference type="eggNOG" id="KOG2551">
    <property type="taxonomic scope" value="Eukaryota"/>
</dbReference>
<dbReference type="HOGENOM" id="CLU_051938_4_1_1"/>
<dbReference type="OMA" id="YVESEGP"/>
<dbReference type="OrthoDB" id="24471at110618"/>
<dbReference type="BioCyc" id="MetaCyc:MONOMER-19344"/>
<dbReference type="PHI-base" id="PHI:3390"/>
<dbReference type="Proteomes" id="UP000009096">
    <property type="component" value="Chromosome 3"/>
</dbReference>
<dbReference type="GO" id="GO:0005737">
    <property type="term" value="C:cytoplasm"/>
    <property type="evidence" value="ECO:0007669"/>
    <property type="project" value="TreeGrafter"/>
</dbReference>
<dbReference type="GO" id="GO:0005634">
    <property type="term" value="C:nucleus"/>
    <property type="evidence" value="ECO:0007669"/>
    <property type="project" value="TreeGrafter"/>
</dbReference>
<dbReference type="GO" id="GO:0016787">
    <property type="term" value="F:hydrolase activity"/>
    <property type="evidence" value="ECO:0007669"/>
    <property type="project" value="UniProtKB-KW"/>
</dbReference>
<dbReference type="GO" id="GO:0019748">
    <property type="term" value="P:secondary metabolic process"/>
    <property type="evidence" value="ECO:0007669"/>
    <property type="project" value="TreeGrafter"/>
</dbReference>
<dbReference type="Gene3D" id="3.40.50.1820">
    <property type="entry name" value="alpha/beta hydrolase"/>
    <property type="match status" value="1"/>
</dbReference>
<dbReference type="InterPro" id="IPR029058">
    <property type="entry name" value="AB_hydrolase_fold"/>
</dbReference>
<dbReference type="InterPro" id="IPR005645">
    <property type="entry name" value="FSH-like_dom"/>
</dbReference>
<dbReference type="InterPro" id="IPR050593">
    <property type="entry name" value="LovG"/>
</dbReference>
<dbReference type="PANTHER" id="PTHR48070:SF4">
    <property type="entry name" value="ESTERASE ALNB"/>
    <property type="match status" value="1"/>
</dbReference>
<dbReference type="PANTHER" id="PTHR48070">
    <property type="entry name" value="ESTERASE OVCA2"/>
    <property type="match status" value="1"/>
</dbReference>
<dbReference type="Pfam" id="PF03959">
    <property type="entry name" value="FSH1"/>
    <property type="match status" value="1"/>
</dbReference>
<dbReference type="SUPFAM" id="SSF53474">
    <property type="entry name" value="alpha/beta-Hydrolases"/>
    <property type="match status" value="1"/>
</dbReference>
<sequence>MRFLCLHGYAFSVEVLQQQMEPITAHLPSDWEYEFLEAGMEPTQLMLPNLKQVPKPNSSWYNFPYPEDVEEAYERLAAYVESEGPFDGIWGFSQGGSMAALLLLMHQAEHPDTPYPFKMAIFTSAFLPHSFDNGVISWDLTEKNTLEPAYLPGRIDVSHGKKLDWKKDLHTSIEYDMINAVKDELDFPVDLLLRWRPSDIPEKIPVPSVHVRGLKDHYSFVDESVYELFDPDMARKMTHRGGHNFPRYNEELVHFAELIIETVVSLH</sequence>
<accession>W7MT28</accession>
<evidence type="ECO:0000250" key="1">
    <source>
        <dbReference type="UniProtKB" id="P38777"/>
    </source>
</evidence>
<evidence type="ECO:0000250" key="2">
    <source>
        <dbReference type="UniProtKB" id="S0DRW4"/>
    </source>
</evidence>
<evidence type="ECO:0000269" key="3">
    <source>
    </source>
</evidence>
<evidence type="ECO:0000269" key="4">
    <source>
    </source>
</evidence>
<evidence type="ECO:0000269" key="5">
    <source>
    </source>
</evidence>
<evidence type="ECO:0000269" key="6">
    <source>
    </source>
</evidence>
<evidence type="ECO:0000269" key="7">
    <source>
    </source>
</evidence>
<evidence type="ECO:0000269" key="8">
    <source>
    </source>
</evidence>
<evidence type="ECO:0000269" key="9">
    <source>
    </source>
</evidence>
<evidence type="ECO:0000269" key="10">
    <source>
    </source>
</evidence>
<evidence type="ECO:0000269" key="11">
    <source>
    </source>
</evidence>
<evidence type="ECO:0000269" key="12">
    <source>
    </source>
</evidence>
<evidence type="ECO:0000303" key="13">
    <source>
    </source>
</evidence>
<evidence type="ECO:0000305" key="14"/>
<evidence type="ECO:0000305" key="15">
    <source>
    </source>
</evidence>
<keyword id="KW-0378">Hydrolase</keyword>
<keyword id="KW-1185">Reference proteome</keyword>
<name>FUB4_GIBM7</name>
<gene>
    <name evidence="13" type="primary">FUB4</name>
    <name type="ORF">FVEG_12520</name>
</gene>
<comment type="function">
    <text evidence="2 7 12">Hydrolase; part of the gene cluster that mediates the biosynthesis of fusaric acid, a mycotoxin with low to moderate toxicity to animals and humans, but with high phytotoxic properties (PubMed:22652150, PubMed:25372119). L-aspartate is suggested as fusaric acid amino acid precursor that is activated and further processed to O-acetyl-L-homoserine by cluster enzymes aspartate kinase FUB3 and homoserine O-acetyltransferase FUB5, as well as enzymes of the primary metabolism (By similarity). The polyketide synthase (PKS) FUB1 generates the triketide trans-2-hexenal which is presumptively released by the hydrolase FUB4 and linked to the NRPS-bound amino acid precursor by NAD(P)-dependent dehydrogenase FUB6 (By similarity). FUB1, FUB4, and the non-canonical NRPS Fub8 may form an enzyme complex (By similarity). Further processing of the NRPS-bound intermediate might be carried out by FUB6 and the sulfhydrylase FUB7, enabling a spontaneous electrocyclization to close the carbon backbone of fusaric acid (By similarity). Dihydrofusaric acid is likely to be released via reduction by the thioester reductase (TR) domain of FUB8 whereupon the final oxidation to fusaric acid may (also) be performed by the FMN-dependent dehydrogenase FUB9 (By similarity).</text>
</comment>
<comment type="pathway">
    <text evidence="7 12">Mycotoxin biosynthesis.</text>
</comment>
<comment type="induction">
    <text evidence="8">Expression is positively regulated by the secondary metabolism regulator LAE1 (PubMed:22713715).</text>
</comment>
<comment type="disruption phenotype">
    <text evidence="12">Impairs the production of fusaric acid (PubMed:25372119).</text>
</comment>
<comment type="biotechnology">
    <text evidence="3 4 5 6 9 10 11">Fusaric acid is phytotoxic to plants such as cotton and banana (PubMed:20955724, PubMed:23922960). It has been shown to induce programmed cell death in plants (PubMed:16868776, PubMed:23838885). In addition to a mild toxicity to animals, fusaric acid exhibits acanthamoebicidal, antioomycete, and antimycobacterial activities (PubMed:17927749, PubMed:21811925, PubMed:22864988).</text>
</comment>
<comment type="similarity">
    <text evidence="14">Belongs to the AB hydrolase 3 family.</text>
</comment>
<protein>
    <recommendedName>
        <fullName evidence="13">Hydrolase FUB4</fullName>
        <ecNumber evidence="15">3.1.-.-</ecNumber>
    </recommendedName>
    <alternativeName>
        <fullName evidence="13">Fusaric acid biosynthesis protein 4</fullName>
    </alternativeName>
</protein>
<reference key="1">
    <citation type="journal article" date="2010" name="Nature">
        <title>Comparative genomics reveals mobile pathogenicity chromosomes in Fusarium.</title>
        <authorList>
            <person name="Ma L.-J."/>
            <person name="van der Does H.C."/>
            <person name="Borkovich K.A."/>
            <person name="Coleman J.J."/>
            <person name="Daboussi M.-J."/>
            <person name="Di Pietro A."/>
            <person name="Dufresne M."/>
            <person name="Freitag M."/>
            <person name="Grabherr M."/>
            <person name="Henrissat B."/>
            <person name="Houterman P.M."/>
            <person name="Kang S."/>
            <person name="Shim W.-B."/>
            <person name="Woloshuk C."/>
            <person name="Xie X."/>
            <person name="Xu J.-R."/>
            <person name="Antoniw J."/>
            <person name="Baker S.E."/>
            <person name="Bluhm B.H."/>
            <person name="Breakspear A."/>
            <person name="Brown D.W."/>
            <person name="Butchko R.A.E."/>
            <person name="Chapman S."/>
            <person name="Coulson R."/>
            <person name="Coutinho P.M."/>
            <person name="Danchin E.G.J."/>
            <person name="Diener A."/>
            <person name="Gale L.R."/>
            <person name="Gardiner D.M."/>
            <person name="Goff S."/>
            <person name="Hammond-Kosack K.E."/>
            <person name="Hilburn K."/>
            <person name="Hua-Van A."/>
            <person name="Jonkers W."/>
            <person name="Kazan K."/>
            <person name="Kodira C.D."/>
            <person name="Koehrsen M."/>
            <person name="Kumar L."/>
            <person name="Lee Y.-H."/>
            <person name="Li L."/>
            <person name="Manners J.M."/>
            <person name="Miranda-Saavedra D."/>
            <person name="Mukherjee M."/>
            <person name="Park G."/>
            <person name="Park J."/>
            <person name="Park S.-Y."/>
            <person name="Proctor R.H."/>
            <person name="Regev A."/>
            <person name="Ruiz-Roldan M.C."/>
            <person name="Sain D."/>
            <person name="Sakthikumar S."/>
            <person name="Sykes S."/>
            <person name="Schwartz D.C."/>
            <person name="Turgeon B.G."/>
            <person name="Wapinski I."/>
            <person name="Yoder O."/>
            <person name="Young S."/>
            <person name="Zeng Q."/>
            <person name="Zhou S."/>
            <person name="Galagan J."/>
            <person name="Cuomo C.A."/>
            <person name="Kistler H.C."/>
            <person name="Rep M."/>
        </authorList>
    </citation>
    <scope>NUCLEOTIDE SEQUENCE [LARGE SCALE GENOMIC DNA]</scope>
    <source>
        <strain>M3125 / FGSC 7600</strain>
    </source>
</reference>
<reference key="2">
    <citation type="journal article" date="2006" name="Planta">
        <title>Fusaric acid induces apoptosis in saffron root-tip cells: roles of caspase-like activity, cytochrome c, and H2O2.</title>
        <authorList>
            <person name="Samadi L."/>
            <person name="Shahsavan Behboodi B."/>
        </authorList>
    </citation>
    <scope>BIOTECHNOLOGY</scope>
</reference>
<reference key="3">
    <citation type="journal article" date="2008" name="J. Appl. Microbiol.">
        <title>Bikaverin and fusaric acid from Fusarium oxysporum show antioomycete activity against Phytophthora infestans.</title>
        <authorList>
            <person name="Son S.W."/>
            <person name="Kim H.Y."/>
            <person name="Choi G.J."/>
            <person name="Lim H.K."/>
            <person name="Jang K.S."/>
            <person name="Lee S.O."/>
            <person name="Lee S."/>
            <person name="Sung N.D."/>
            <person name="Kim J.C."/>
        </authorList>
    </citation>
    <scope>BIOTECHNOLOGY</scope>
</reference>
<reference key="4">
    <citation type="journal article" date="2011" name="Arch. Pharm. Res.">
        <title>Antimycobacterial activity of fusaric acid from a mangrove endophyte and its metal complexes.</title>
        <authorList>
            <person name="Pan J.H."/>
            <person name="Chen Y."/>
            <person name="Huang Y.H."/>
            <person name="Tao Y.W."/>
            <person name="Wang J."/>
            <person name="Li Y."/>
            <person name="Peng Y."/>
            <person name="Dong T."/>
            <person name="Lai X.M."/>
            <person name="Lin Y.C."/>
        </authorList>
    </citation>
    <scope>BIOTECHNOLOGY</scope>
</reference>
<reference key="5">
    <citation type="journal article" date="2011" name="Toxicon">
        <title>Phytotoxicity of fusaric acid and analogs to cotton.</title>
        <authorList>
            <person name="Stipanovic R.D."/>
            <person name="Puckhaber L.S."/>
            <person name="Liu J."/>
            <person name="Bell A.A."/>
        </authorList>
    </citation>
    <scope>BIOTECHNOLOGY</scope>
</reference>
<reference key="6">
    <citation type="journal article" date="2012" name="Fungal Genet. Biol.">
        <title>Identification of gene clusters associated with fusaric acid, fusarin, and perithecial pigment production in Fusarium verticillioides.</title>
        <authorList>
            <person name="Brown D.W."/>
            <person name="Butchko R.A."/>
            <person name="Busman M."/>
            <person name="Proctor R.H."/>
        </authorList>
    </citation>
    <scope>FUNCTION</scope>
</reference>
<reference key="7">
    <citation type="journal article" date="2012" name="Fungal Genet. Biol.">
        <title>Lae1 regulates expression of multiple secondary metabolite gene clusters in Fusarium verticillioides.</title>
        <authorList>
            <person name="Butchko R.A."/>
            <person name="Brown D.W."/>
            <person name="Busman M."/>
            <person name="Tudzynski B."/>
            <person name="Wiemann P."/>
        </authorList>
    </citation>
    <scope>INDUCTION</scope>
</reference>
<reference key="8">
    <citation type="journal article" date="2012" name="Planta Med.">
        <title>In vitro acanthamoebicidal activity of fusaric acid and dehydrofusaric acid from an endophytic fungus Fusarium sp. Tlau3.</title>
        <authorList>
            <person name="Boonman N."/>
            <person name="Prachya S."/>
            <person name="Boonmee A."/>
            <person name="Kittakoop P."/>
            <person name="Wiyakrutta S."/>
            <person name="Sriubolmas N."/>
            <person name="Warit S."/>
            <person name="Dharmkrong-At Chusattayanond A."/>
        </authorList>
    </citation>
    <scope>BIOTECHNOLOGY</scope>
</reference>
<reference key="9">
    <citation type="journal article" date="2013" name="Planta">
        <title>Fusaric acid induction of programmed cell death modulated through nitric oxide signalling in tobacco suspension cells.</title>
        <authorList>
            <person name="Jiao J."/>
            <person name="Zhou B."/>
            <person name="Zhu X."/>
            <person name="Gao Z."/>
            <person name="Liang Y."/>
        </authorList>
    </citation>
    <scope>BIOTECHNOLOGY</scope>
</reference>
<reference key="10">
    <citation type="journal article" date="2013" name="PLoS ONE">
        <title>Contamination of bananas with beauvericin and fusaric acid produced by Fusarium oxysporum f. sp. cubense.</title>
        <authorList>
            <person name="Li C."/>
            <person name="Zuo C."/>
            <person name="Deng G."/>
            <person name="Kuang R."/>
            <person name="Yang Q."/>
            <person name="Hu C."/>
            <person name="Sheng O."/>
            <person name="Zhang S."/>
            <person name="Ma L."/>
            <person name="Wei Y."/>
            <person name="Yang J."/>
            <person name="Liu S."/>
            <person name="Biswas M.K."/>
            <person name="Viljoen A."/>
            <person name="Yi G."/>
        </authorList>
    </citation>
    <scope>BIOTECHNOLOGY</scope>
</reference>
<reference key="11">
    <citation type="journal article" date="2015" name="Mol. Plant Microbe Interact.">
        <title>Identification of a 12-gene fusaric acid biosynthetic gene cluster in Fusarium species through comparative and functional genomics.</title>
        <authorList>
            <person name="Brown D.W."/>
            <person name="Lee S.H."/>
            <person name="Kim L.H."/>
            <person name="Ryu J.G."/>
            <person name="Lee S."/>
            <person name="Seo Y."/>
            <person name="Kim Y.H."/>
            <person name="Busman M."/>
            <person name="Yun S.H."/>
            <person name="Proctor R.H."/>
            <person name="Lee T."/>
        </authorList>
    </citation>
    <scope>FUNCTION</scope>
    <scope>DISRUPTION PHENOTYPE</scope>
    <scope>CATALYTIC ACTIVITY</scope>
</reference>
<proteinExistence type="evidence at protein level"/>